<protein>
    <recommendedName>
        <fullName evidence="1">Xanthine-guanine phosphoribosyltransferase</fullName>
        <shortName evidence="1">XGPRT</shortName>
        <ecNumber evidence="1">2.4.2.-</ecNumber>
        <ecNumber evidence="1">2.4.2.22</ecNumber>
    </recommendedName>
    <alternativeName>
        <fullName evidence="1">Xanthine phosphoribosyltransferase</fullName>
    </alternativeName>
</protein>
<name>XGPT_VIBCH</name>
<gene>
    <name evidence="1" type="primary">gpt</name>
    <name type="ordered locus">VC_2277</name>
</gene>
<feature type="chain" id="PRO_0000139690" description="Xanthine-guanine phosphoribosyltransferase">
    <location>
        <begin position="1"/>
        <end position="154"/>
    </location>
</feature>
<feature type="binding site" evidence="1">
    <location>
        <begin position="37"/>
        <end position="38"/>
    </location>
    <ligand>
        <name>5-phospho-alpha-D-ribose 1-diphosphate</name>
        <dbReference type="ChEBI" id="CHEBI:58017"/>
    </ligand>
</feature>
<feature type="binding site" evidence="1">
    <location>
        <position position="69"/>
    </location>
    <ligand>
        <name>5-phospho-alpha-D-ribose 1-diphosphate</name>
        <dbReference type="ChEBI" id="CHEBI:58017"/>
    </ligand>
</feature>
<feature type="binding site" evidence="1">
    <location>
        <position position="69"/>
    </location>
    <ligand>
        <name>GMP</name>
        <dbReference type="ChEBI" id="CHEBI:58115"/>
    </ligand>
</feature>
<feature type="binding site" evidence="1">
    <location>
        <begin position="88"/>
        <end position="96"/>
    </location>
    <ligand>
        <name>5-phospho-alpha-D-ribose 1-diphosphate</name>
        <dbReference type="ChEBI" id="CHEBI:58017"/>
    </ligand>
</feature>
<feature type="binding site" evidence="1">
    <location>
        <position position="89"/>
    </location>
    <ligand>
        <name>Mg(2+)</name>
        <dbReference type="ChEBI" id="CHEBI:18420"/>
    </ligand>
</feature>
<feature type="binding site" evidence="1">
    <location>
        <begin position="92"/>
        <end position="96"/>
    </location>
    <ligand>
        <name>GMP</name>
        <dbReference type="ChEBI" id="CHEBI:58115"/>
    </ligand>
</feature>
<feature type="binding site" evidence="1">
    <location>
        <position position="92"/>
    </location>
    <ligand>
        <name>guanine</name>
        <dbReference type="ChEBI" id="CHEBI:16235"/>
    </ligand>
</feature>
<feature type="binding site" evidence="1">
    <location>
        <position position="92"/>
    </location>
    <ligand>
        <name>xanthine</name>
        <dbReference type="ChEBI" id="CHEBI:17712"/>
    </ligand>
</feature>
<feature type="binding site" evidence="1">
    <location>
        <begin position="134"/>
        <end position="135"/>
    </location>
    <ligand>
        <name>GMP</name>
        <dbReference type="ChEBI" id="CHEBI:58115"/>
    </ligand>
</feature>
<feature type="binding site" evidence="1">
    <location>
        <position position="135"/>
    </location>
    <ligand>
        <name>guanine</name>
        <dbReference type="ChEBI" id="CHEBI:16235"/>
    </ligand>
</feature>
<feature type="binding site" evidence="1">
    <location>
        <position position="135"/>
    </location>
    <ligand>
        <name>xanthine</name>
        <dbReference type="ChEBI" id="CHEBI:17712"/>
    </ligand>
</feature>
<keyword id="KW-0997">Cell inner membrane</keyword>
<keyword id="KW-1003">Cell membrane</keyword>
<keyword id="KW-0328">Glycosyltransferase</keyword>
<keyword id="KW-0460">Magnesium</keyword>
<keyword id="KW-0472">Membrane</keyword>
<keyword id="KW-0479">Metal-binding</keyword>
<keyword id="KW-0660">Purine salvage</keyword>
<keyword id="KW-1185">Reference proteome</keyword>
<keyword id="KW-0808">Transferase</keyword>
<dbReference type="EC" id="2.4.2.-" evidence="1"/>
<dbReference type="EC" id="2.4.2.22" evidence="1"/>
<dbReference type="EMBL" id="AE003852">
    <property type="protein sequence ID" value="AAF95421.1"/>
    <property type="molecule type" value="Genomic_DNA"/>
</dbReference>
<dbReference type="PIR" id="A82096">
    <property type="entry name" value="A82096"/>
</dbReference>
<dbReference type="RefSeq" id="NP_231908.1">
    <property type="nucleotide sequence ID" value="NC_002505.1"/>
</dbReference>
<dbReference type="RefSeq" id="WP_000037415.1">
    <property type="nucleotide sequence ID" value="NZ_LT906614.1"/>
</dbReference>
<dbReference type="SMR" id="Q9KPT5"/>
<dbReference type="STRING" id="243277.VC_2277"/>
<dbReference type="DNASU" id="2613199"/>
<dbReference type="EnsemblBacteria" id="AAF95421">
    <property type="protein sequence ID" value="AAF95421"/>
    <property type="gene ID" value="VC_2277"/>
</dbReference>
<dbReference type="GeneID" id="94013056"/>
<dbReference type="KEGG" id="vch:VC_2277"/>
<dbReference type="PATRIC" id="fig|243277.26.peg.2172"/>
<dbReference type="eggNOG" id="COG2236">
    <property type="taxonomic scope" value="Bacteria"/>
</dbReference>
<dbReference type="HOGENOM" id="CLU_080904_3_0_6"/>
<dbReference type="UniPathway" id="UPA00602">
    <property type="reaction ID" value="UER00658"/>
</dbReference>
<dbReference type="UniPathway" id="UPA00909">
    <property type="reaction ID" value="UER00887"/>
</dbReference>
<dbReference type="Proteomes" id="UP000000584">
    <property type="component" value="Chromosome 1"/>
</dbReference>
<dbReference type="GO" id="GO:0005829">
    <property type="term" value="C:cytosol"/>
    <property type="evidence" value="ECO:0000318"/>
    <property type="project" value="GO_Central"/>
</dbReference>
<dbReference type="GO" id="GO:0005886">
    <property type="term" value="C:plasma membrane"/>
    <property type="evidence" value="ECO:0007669"/>
    <property type="project" value="UniProtKB-SubCell"/>
</dbReference>
<dbReference type="GO" id="GO:0052657">
    <property type="term" value="F:guanine phosphoribosyltransferase activity"/>
    <property type="evidence" value="ECO:0007669"/>
    <property type="project" value="RHEA"/>
</dbReference>
<dbReference type="GO" id="GO:0004422">
    <property type="term" value="F:hypoxanthine phosphoribosyltransferase activity"/>
    <property type="evidence" value="ECO:0000318"/>
    <property type="project" value="GO_Central"/>
</dbReference>
<dbReference type="GO" id="GO:0000287">
    <property type="term" value="F:magnesium ion binding"/>
    <property type="evidence" value="ECO:0007669"/>
    <property type="project" value="UniProtKB-UniRule"/>
</dbReference>
<dbReference type="GO" id="GO:0000310">
    <property type="term" value="F:xanthine phosphoribosyltransferase activity"/>
    <property type="evidence" value="ECO:0000318"/>
    <property type="project" value="GO_Central"/>
</dbReference>
<dbReference type="GO" id="GO:0032263">
    <property type="term" value="P:GMP salvage"/>
    <property type="evidence" value="ECO:0000318"/>
    <property type="project" value="GO_Central"/>
</dbReference>
<dbReference type="GO" id="GO:0032264">
    <property type="term" value="P:IMP salvage"/>
    <property type="evidence" value="ECO:0000318"/>
    <property type="project" value="GO_Central"/>
</dbReference>
<dbReference type="GO" id="GO:0006166">
    <property type="term" value="P:purine ribonucleoside salvage"/>
    <property type="evidence" value="ECO:0007669"/>
    <property type="project" value="UniProtKB-KW"/>
</dbReference>
<dbReference type="GO" id="GO:0032265">
    <property type="term" value="P:XMP salvage"/>
    <property type="evidence" value="ECO:0000318"/>
    <property type="project" value="GO_Central"/>
</dbReference>
<dbReference type="CDD" id="cd06223">
    <property type="entry name" value="PRTases_typeI"/>
    <property type="match status" value="1"/>
</dbReference>
<dbReference type="FunFam" id="3.40.50.2020:FF:000009">
    <property type="entry name" value="Xanthine phosphoribosyltransferase"/>
    <property type="match status" value="1"/>
</dbReference>
<dbReference type="Gene3D" id="3.40.50.2020">
    <property type="match status" value="1"/>
</dbReference>
<dbReference type="HAMAP" id="MF_01903">
    <property type="entry name" value="XGPRT"/>
    <property type="match status" value="1"/>
</dbReference>
<dbReference type="InterPro" id="IPR000836">
    <property type="entry name" value="PRibTrfase_dom"/>
</dbReference>
<dbReference type="InterPro" id="IPR029057">
    <property type="entry name" value="PRTase-like"/>
</dbReference>
<dbReference type="InterPro" id="IPR023747">
    <property type="entry name" value="Xanthine_Guanine_PRibTrfase"/>
</dbReference>
<dbReference type="NCBIfam" id="NF006613">
    <property type="entry name" value="PRK09177.1"/>
    <property type="match status" value="1"/>
</dbReference>
<dbReference type="PANTHER" id="PTHR39563">
    <property type="entry name" value="XANTHINE PHOSPHORIBOSYLTRANSFERASE"/>
    <property type="match status" value="1"/>
</dbReference>
<dbReference type="PANTHER" id="PTHR39563:SF1">
    <property type="entry name" value="XANTHINE-GUANINE PHOSPHORIBOSYLTRANSFERASE"/>
    <property type="match status" value="1"/>
</dbReference>
<dbReference type="Pfam" id="PF00156">
    <property type="entry name" value="Pribosyltran"/>
    <property type="match status" value="1"/>
</dbReference>
<dbReference type="SUPFAM" id="SSF53271">
    <property type="entry name" value="PRTase-like"/>
    <property type="match status" value="1"/>
</dbReference>
<dbReference type="PROSITE" id="PS00103">
    <property type="entry name" value="PUR_PYR_PR_TRANSFER"/>
    <property type="match status" value="1"/>
</dbReference>
<proteinExistence type="inferred from homology"/>
<accession>Q9KPT5</accession>
<organism>
    <name type="scientific">Vibrio cholerae serotype O1 (strain ATCC 39315 / El Tor Inaba N16961)</name>
    <dbReference type="NCBI Taxonomy" id="243277"/>
    <lineage>
        <taxon>Bacteria</taxon>
        <taxon>Pseudomonadati</taxon>
        <taxon>Pseudomonadota</taxon>
        <taxon>Gammaproteobacteria</taxon>
        <taxon>Vibrionales</taxon>
        <taxon>Vibrionaceae</taxon>
        <taxon>Vibrio</taxon>
    </lineage>
</organism>
<sequence length="154" mass="17666">MSKKFVITWDNMQHYCRELAQRQMPAEQWKGILGVSRGGLVPAAILARELGIRYVDTVCISSYDHDHQRDMTVLKAPEHDGEGFLIIDDLVDSGDTARKIREMYPKAKFVTVCAKPAGKDLVDEYVVDIPQDTWIEQPWDMVLSYVEPVNRKQK</sequence>
<comment type="function">
    <text evidence="1">Purine salvage pathway enzyme that catalyzes the transfer of the ribosyl-5-phosphate group from 5-phospho-alpha-D-ribose 1-diphosphate (PRPP) to the N9 position of the 6-oxopurines guanine and xanthine to form the corresponding ribonucleotides GMP (guanosine 5'-monophosphate) and XMP (xanthosine 5'-monophosphate), with the release of PPi. To a lesser extent, also acts on hypoxanthine.</text>
</comment>
<comment type="catalytic activity">
    <reaction evidence="1">
        <text>GMP + diphosphate = guanine + 5-phospho-alpha-D-ribose 1-diphosphate</text>
        <dbReference type="Rhea" id="RHEA:25424"/>
        <dbReference type="ChEBI" id="CHEBI:16235"/>
        <dbReference type="ChEBI" id="CHEBI:33019"/>
        <dbReference type="ChEBI" id="CHEBI:58017"/>
        <dbReference type="ChEBI" id="CHEBI:58115"/>
    </reaction>
    <physiologicalReaction direction="right-to-left" evidence="1">
        <dbReference type="Rhea" id="RHEA:25426"/>
    </physiologicalReaction>
</comment>
<comment type="catalytic activity">
    <reaction evidence="1">
        <text>XMP + diphosphate = xanthine + 5-phospho-alpha-D-ribose 1-diphosphate</text>
        <dbReference type="Rhea" id="RHEA:10800"/>
        <dbReference type="ChEBI" id="CHEBI:17712"/>
        <dbReference type="ChEBI" id="CHEBI:33019"/>
        <dbReference type="ChEBI" id="CHEBI:57464"/>
        <dbReference type="ChEBI" id="CHEBI:58017"/>
        <dbReference type="EC" id="2.4.2.22"/>
    </reaction>
    <physiologicalReaction direction="right-to-left" evidence="1">
        <dbReference type="Rhea" id="RHEA:10802"/>
    </physiologicalReaction>
</comment>
<comment type="catalytic activity">
    <reaction evidence="1">
        <text>IMP + diphosphate = hypoxanthine + 5-phospho-alpha-D-ribose 1-diphosphate</text>
        <dbReference type="Rhea" id="RHEA:17973"/>
        <dbReference type="ChEBI" id="CHEBI:17368"/>
        <dbReference type="ChEBI" id="CHEBI:33019"/>
        <dbReference type="ChEBI" id="CHEBI:58017"/>
        <dbReference type="ChEBI" id="CHEBI:58053"/>
    </reaction>
    <physiologicalReaction direction="right-to-left" evidence="1">
        <dbReference type="Rhea" id="RHEA:17975"/>
    </physiologicalReaction>
</comment>
<comment type="cofactor">
    <cofactor evidence="1">
        <name>Mg(2+)</name>
        <dbReference type="ChEBI" id="CHEBI:18420"/>
    </cofactor>
</comment>
<comment type="pathway">
    <text evidence="1">Purine metabolism; GMP biosynthesis via salvage pathway; GMP from guanine: step 1/1.</text>
</comment>
<comment type="pathway">
    <text evidence="1">Purine metabolism; XMP biosynthesis via salvage pathway; XMP from xanthine: step 1/1.</text>
</comment>
<comment type="subunit">
    <text evidence="1">Homotetramer.</text>
</comment>
<comment type="subcellular location">
    <subcellularLocation>
        <location evidence="1">Cell inner membrane</location>
        <topology evidence="1">Peripheral membrane protein</topology>
    </subcellularLocation>
</comment>
<comment type="similarity">
    <text evidence="1">Belongs to the purine/pyrimidine phosphoribosyltransferase family. XGPT subfamily.</text>
</comment>
<evidence type="ECO:0000255" key="1">
    <source>
        <dbReference type="HAMAP-Rule" id="MF_01903"/>
    </source>
</evidence>
<reference key="1">
    <citation type="journal article" date="2000" name="Nature">
        <title>DNA sequence of both chromosomes of the cholera pathogen Vibrio cholerae.</title>
        <authorList>
            <person name="Heidelberg J.F."/>
            <person name="Eisen J.A."/>
            <person name="Nelson W.C."/>
            <person name="Clayton R.A."/>
            <person name="Gwinn M.L."/>
            <person name="Dodson R.J."/>
            <person name="Haft D.H."/>
            <person name="Hickey E.K."/>
            <person name="Peterson J.D."/>
            <person name="Umayam L.A."/>
            <person name="Gill S.R."/>
            <person name="Nelson K.E."/>
            <person name="Read T.D."/>
            <person name="Tettelin H."/>
            <person name="Richardson D.L."/>
            <person name="Ermolaeva M.D."/>
            <person name="Vamathevan J.J."/>
            <person name="Bass S."/>
            <person name="Qin H."/>
            <person name="Dragoi I."/>
            <person name="Sellers P."/>
            <person name="McDonald L.A."/>
            <person name="Utterback T.R."/>
            <person name="Fleischmann R.D."/>
            <person name="Nierman W.C."/>
            <person name="White O."/>
            <person name="Salzberg S.L."/>
            <person name="Smith H.O."/>
            <person name="Colwell R.R."/>
            <person name="Mekalanos J.J."/>
            <person name="Venter J.C."/>
            <person name="Fraser C.M."/>
        </authorList>
    </citation>
    <scope>NUCLEOTIDE SEQUENCE [LARGE SCALE GENOMIC DNA]</scope>
    <source>
        <strain>ATCC 39315 / El Tor Inaba N16961</strain>
    </source>
</reference>